<accession>Q0VD30</accession>
<keyword id="KW-0007">Acetylation</keyword>
<keyword id="KW-0344">Guanine-nucleotide releasing factor</keyword>
<keyword id="KW-0458">Lysosome</keyword>
<keyword id="KW-0472">Membrane</keyword>
<keyword id="KW-0597">Phosphoprotein</keyword>
<keyword id="KW-1185">Reference proteome</keyword>
<comment type="function">
    <text evidence="2">Acts in concert with MON1A, as a guanine exchange factor (GEF) for RAB7, promotes the exchange of GDP to GTP, converting it from an inactive GDP-bound form into an active GTP-bound form.</text>
</comment>
<comment type="subunit">
    <text evidence="2">Interacts with MON1A. Found in a complex with RMC1, CCZ1, MON1A and MON1B.</text>
</comment>
<comment type="subcellular location">
    <subcellularLocation>
        <location evidence="1">Lysosome membrane</location>
    </subcellularLocation>
</comment>
<comment type="similarity">
    <text evidence="3">Belongs to the CCZ1 family.</text>
</comment>
<gene>
    <name type="primary">CCZ1</name>
</gene>
<protein>
    <recommendedName>
        <fullName>Vacuolar fusion protein CCZ1 homolog</fullName>
    </recommendedName>
</protein>
<organism>
    <name type="scientific">Bos taurus</name>
    <name type="common">Bovine</name>
    <dbReference type="NCBI Taxonomy" id="9913"/>
    <lineage>
        <taxon>Eukaryota</taxon>
        <taxon>Metazoa</taxon>
        <taxon>Chordata</taxon>
        <taxon>Craniata</taxon>
        <taxon>Vertebrata</taxon>
        <taxon>Euteleostomi</taxon>
        <taxon>Mammalia</taxon>
        <taxon>Eutheria</taxon>
        <taxon>Laurasiatheria</taxon>
        <taxon>Artiodactyla</taxon>
        <taxon>Ruminantia</taxon>
        <taxon>Pecora</taxon>
        <taxon>Bovidae</taxon>
        <taxon>Bovinae</taxon>
        <taxon>Bos</taxon>
    </lineage>
</organism>
<dbReference type="EMBL" id="BC119863">
    <property type="protein sequence ID" value="AAI19864.1"/>
    <property type="molecule type" value="mRNA"/>
</dbReference>
<dbReference type="RefSeq" id="NP_001068960.1">
    <property type="nucleotide sequence ID" value="NM_001075492.1"/>
</dbReference>
<dbReference type="SMR" id="Q0VD30"/>
<dbReference type="FunCoup" id="Q0VD30">
    <property type="interactions" value="3781"/>
</dbReference>
<dbReference type="STRING" id="9913.ENSBTAP00000004259"/>
<dbReference type="PaxDb" id="9913-ENSBTAP00000004259"/>
<dbReference type="Ensembl" id="ENSBTAT00000004259.6">
    <property type="protein sequence ID" value="ENSBTAP00000004259.5"/>
    <property type="gene ID" value="ENSBTAG00000003288.6"/>
</dbReference>
<dbReference type="GeneID" id="511088"/>
<dbReference type="KEGG" id="bta:511088"/>
<dbReference type="CTD" id="51622"/>
<dbReference type="VEuPathDB" id="HostDB:ENSBTAG00000003288"/>
<dbReference type="eggNOG" id="KOG2622">
    <property type="taxonomic scope" value="Eukaryota"/>
</dbReference>
<dbReference type="GeneTree" id="ENSGT00390000004713"/>
<dbReference type="HOGENOM" id="CLU_037828_2_0_1"/>
<dbReference type="InParanoid" id="Q0VD30"/>
<dbReference type="OMA" id="DCQALHT"/>
<dbReference type="OrthoDB" id="240546at2759"/>
<dbReference type="TreeFam" id="TF314962"/>
<dbReference type="Reactome" id="R-BTA-8876198">
    <property type="pathway name" value="RAB GEFs exchange GTP for GDP on RABs"/>
</dbReference>
<dbReference type="Proteomes" id="UP000009136">
    <property type="component" value="Chromosome 25"/>
</dbReference>
<dbReference type="Bgee" id="ENSBTAG00000003288">
    <property type="expression patterns" value="Expressed in oocyte and 108 other cell types or tissues"/>
</dbReference>
<dbReference type="GO" id="GO:0043231">
    <property type="term" value="C:intracellular membrane-bounded organelle"/>
    <property type="evidence" value="ECO:0000318"/>
    <property type="project" value="GO_Central"/>
</dbReference>
<dbReference type="GO" id="GO:0005765">
    <property type="term" value="C:lysosomal membrane"/>
    <property type="evidence" value="ECO:0007669"/>
    <property type="project" value="UniProtKB-SubCell"/>
</dbReference>
<dbReference type="GO" id="GO:0035658">
    <property type="term" value="C:Mon1-Ccz1 complex"/>
    <property type="evidence" value="ECO:0000250"/>
    <property type="project" value="UniProtKB"/>
</dbReference>
<dbReference type="GO" id="GO:0005085">
    <property type="term" value="F:guanyl-nucleotide exchange factor activity"/>
    <property type="evidence" value="ECO:0000250"/>
    <property type="project" value="UniProtKB"/>
</dbReference>
<dbReference type="GO" id="GO:0016192">
    <property type="term" value="P:vesicle-mediated transport"/>
    <property type="evidence" value="ECO:0000318"/>
    <property type="project" value="GO_Central"/>
</dbReference>
<dbReference type="InterPro" id="IPR013176">
    <property type="entry name" value="Ccz1"/>
</dbReference>
<dbReference type="InterPro" id="IPR043987">
    <property type="entry name" value="CCZ1/INTU/HSP4_longin_1"/>
</dbReference>
<dbReference type="InterPro" id="IPR043989">
    <property type="entry name" value="CCZ1/INTU/HSP4_longin_3"/>
</dbReference>
<dbReference type="InterPro" id="IPR043988">
    <property type="entry name" value="CCZ1/INTU_longin_2"/>
</dbReference>
<dbReference type="PANTHER" id="PTHR13056">
    <property type="entry name" value="VACUOLAR FUSION PROTEIN CCZ1 HOMOLOG-RELATED"/>
    <property type="match status" value="1"/>
</dbReference>
<dbReference type="PANTHER" id="PTHR13056:SF0">
    <property type="entry name" value="VACUOLAR FUSION PROTEIN CCZ1 HOMOLOG-RELATED"/>
    <property type="match status" value="1"/>
</dbReference>
<dbReference type="Pfam" id="PF19031">
    <property type="entry name" value="Intu_longin_1"/>
    <property type="match status" value="1"/>
</dbReference>
<dbReference type="Pfam" id="PF19032">
    <property type="entry name" value="Intu_longin_2"/>
    <property type="match status" value="1"/>
</dbReference>
<dbReference type="Pfam" id="PF19033">
    <property type="entry name" value="Intu_longin_3"/>
    <property type="match status" value="1"/>
</dbReference>
<sequence length="480" mass="55502">MAAAASGAGAGAAQEKQFPPALLSFFIYNPRFGPREGEEENKILFYYPNEVEKNEKIRNVGLCEAIVQFTRTFSPSKPAKSLHTQKNRQFFNEPEENFWMVMVVRNPIIEKQSKDGKPVVEYQEEELLDKVYSSVLQQCYSMYKLFNGTFLRAMEDGGVKLLKERLEKFFHRYLQTLHLQSCDLLDIFGGISFFPLDKMTYLKIQSFINRMEESLSIVKYTAFLYNDQLIWSGLEQDDMRILYKYLTTSLFPRHIEPELAGRDSPIRAEMPGNLQHYGRFLTGPLNLNDPEAKCRFPKIFVNTDDTYEALHLIVYKAMSAAVCFMIDASIQPTLDFCRRLDSIVGPQLTVLASDICEQFNINKRMSGSEKEPQFKFIYFNHMNLAEKSTVHMRKTPSVSLTSVHPDLMKILGDINSDFTRVDEDEEIIVKAMSDYWVVGKKSDQRELYVILNQKNANLIEVNEEVKKLCATQFNNIFFLD</sequence>
<evidence type="ECO:0000250" key="1"/>
<evidence type="ECO:0000250" key="2">
    <source>
        <dbReference type="UniProtKB" id="P86791"/>
    </source>
</evidence>
<evidence type="ECO:0000305" key="3"/>
<reference key="1">
    <citation type="submission" date="2006-08" db="EMBL/GenBank/DDBJ databases">
        <authorList>
            <consortium name="NIH - Mammalian Gene Collection (MGC) project"/>
        </authorList>
    </citation>
    <scope>NUCLEOTIDE SEQUENCE [LARGE SCALE MRNA]</scope>
    <source>
        <strain>Hereford</strain>
        <tissue>Thalamus</tissue>
    </source>
</reference>
<proteinExistence type="evidence at transcript level"/>
<feature type="initiator methionine" description="Removed" evidence="2">
    <location>
        <position position="1"/>
    </location>
</feature>
<feature type="chain" id="PRO_0000327399" description="Vacuolar fusion protein CCZ1 homolog">
    <location>
        <begin position="2"/>
        <end position="480"/>
    </location>
</feature>
<feature type="modified residue" description="N-acetylalanine" evidence="2">
    <location>
        <position position="2"/>
    </location>
</feature>
<feature type="modified residue" description="Phosphoserine" evidence="2">
    <location>
        <position position="74"/>
    </location>
</feature>
<feature type="modified residue" description="Phosphoserine" evidence="2">
    <location>
        <position position="264"/>
    </location>
</feature>
<name>CCZ1_BOVIN</name>